<keyword id="KW-1003">Cell membrane</keyword>
<keyword id="KW-0472">Membrane</keyword>
<keyword id="KW-1185">Reference proteome</keyword>
<keyword id="KW-0812">Transmembrane</keyword>
<keyword id="KW-1133">Transmembrane helix</keyword>
<keyword id="KW-0813">Transport</keyword>
<accession>P42314</accession>
<name>YXJC_BACSU</name>
<dbReference type="EMBL" id="D83026">
    <property type="protein sequence ID" value="BAA11704.1"/>
    <property type="status" value="ALT_FRAME"/>
    <property type="molecule type" value="Genomic_DNA"/>
</dbReference>
<dbReference type="EMBL" id="AL009126">
    <property type="protein sequence ID" value="CAB15926.3"/>
    <property type="molecule type" value="Genomic_DNA"/>
</dbReference>
<dbReference type="PIR" id="A70079">
    <property type="entry name" value="A70079"/>
</dbReference>
<dbReference type="RefSeq" id="NP_391779.3">
    <property type="nucleotide sequence ID" value="NC_000964.3"/>
</dbReference>
<dbReference type="RefSeq" id="WP_003243205.1">
    <property type="nucleotide sequence ID" value="NZ_OZ025638.1"/>
</dbReference>
<dbReference type="FunCoup" id="P42314">
    <property type="interactions" value="6"/>
</dbReference>
<dbReference type="STRING" id="224308.BSU39000"/>
<dbReference type="PaxDb" id="224308-BSU39000"/>
<dbReference type="EnsemblBacteria" id="CAB15926">
    <property type="protein sequence ID" value="CAB15926"/>
    <property type="gene ID" value="BSU_39000"/>
</dbReference>
<dbReference type="GeneID" id="937455"/>
<dbReference type="KEGG" id="bsu:BSU39000"/>
<dbReference type="PATRIC" id="fig|224308.179.peg.4220"/>
<dbReference type="eggNOG" id="COG2610">
    <property type="taxonomic scope" value="Bacteria"/>
</dbReference>
<dbReference type="InParanoid" id="P42314"/>
<dbReference type="OrthoDB" id="86125at2"/>
<dbReference type="PhylomeDB" id="P42314"/>
<dbReference type="BioCyc" id="BSUB:BSU39000-MONOMER"/>
<dbReference type="Proteomes" id="UP000001570">
    <property type="component" value="Chromosome"/>
</dbReference>
<dbReference type="GO" id="GO:0005886">
    <property type="term" value="C:plasma membrane"/>
    <property type="evidence" value="ECO:0000318"/>
    <property type="project" value="GO_Central"/>
</dbReference>
<dbReference type="GO" id="GO:0015128">
    <property type="term" value="F:gluconate transmembrane transporter activity"/>
    <property type="evidence" value="ECO:0007669"/>
    <property type="project" value="InterPro"/>
</dbReference>
<dbReference type="InterPro" id="IPR003474">
    <property type="entry name" value="Glcn_transporter"/>
</dbReference>
<dbReference type="PANTHER" id="PTHR30354:SF7">
    <property type="entry name" value="BLL7963 PROTEIN"/>
    <property type="match status" value="1"/>
</dbReference>
<dbReference type="PANTHER" id="PTHR30354">
    <property type="entry name" value="GNT FAMILY GLUCONATE TRANSPORTER"/>
    <property type="match status" value="1"/>
</dbReference>
<reference key="1">
    <citation type="journal article" date="1996" name="Microbiology">
        <title>Sequencing of a 65 kb region of the Bacillus subtilis genome containing the lic and cel loci, and creation of a 177 kb contig covering the gnt-sacXY region.</title>
        <authorList>
            <person name="Yoshida K."/>
            <person name="Shindo K."/>
            <person name="Sano H."/>
            <person name="Seki S."/>
            <person name="Fujimura M."/>
            <person name="Yanai N."/>
            <person name="Miwa Y."/>
            <person name="Fujita Y."/>
        </authorList>
    </citation>
    <scope>NUCLEOTIDE SEQUENCE [GENOMIC DNA]</scope>
    <source>
        <strain>168 / BGSC1A1</strain>
    </source>
</reference>
<reference key="2">
    <citation type="journal article" date="1997" name="Nature">
        <title>The complete genome sequence of the Gram-positive bacterium Bacillus subtilis.</title>
        <authorList>
            <person name="Kunst F."/>
            <person name="Ogasawara N."/>
            <person name="Moszer I."/>
            <person name="Albertini A.M."/>
            <person name="Alloni G."/>
            <person name="Azevedo V."/>
            <person name="Bertero M.G."/>
            <person name="Bessieres P."/>
            <person name="Bolotin A."/>
            <person name="Borchert S."/>
            <person name="Borriss R."/>
            <person name="Boursier L."/>
            <person name="Brans A."/>
            <person name="Braun M."/>
            <person name="Brignell S.C."/>
            <person name="Bron S."/>
            <person name="Brouillet S."/>
            <person name="Bruschi C.V."/>
            <person name="Caldwell B."/>
            <person name="Capuano V."/>
            <person name="Carter N.M."/>
            <person name="Choi S.-K."/>
            <person name="Codani J.-J."/>
            <person name="Connerton I.F."/>
            <person name="Cummings N.J."/>
            <person name="Daniel R.A."/>
            <person name="Denizot F."/>
            <person name="Devine K.M."/>
            <person name="Duesterhoeft A."/>
            <person name="Ehrlich S.D."/>
            <person name="Emmerson P.T."/>
            <person name="Entian K.-D."/>
            <person name="Errington J."/>
            <person name="Fabret C."/>
            <person name="Ferrari E."/>
            <person name="Foulger D."/>
            <person name="Fritz C."/>
            <person name="Fujita M."/>
            <person name="Fujita Y."/>
            <person name="Fuma S."/>
            <person name="Galizzi A."/>
            <person name="Galleron N."/>
            <person name="Ghim S.-Y."/>
            <person name="Glaser P."/>
            <person name="Goffeau A."/>
            <person name="Golightly E.J."/>
            <person name="Grandi G."/>
            <person name="Guiseppi G."/>
            <person name="Guy B.J."/>
            <person name="Haga K."/>
            <person name="Haiech J."/>
            <person name="Harwood C.R."/>
            <person name="Henaut A."/>
            <person name="Hilbert H."/>
            <person name="Holsappel S."/>
            <person name="Hosono S."/>
            <person name="Hullo M.-F."/>
            <person name="Itaya M."/>
            <person name="Jones L.-M."/>
            <person name="Joris B."/>
            <person name="Karamata D."/>
            <person name="Kasahara Y."/>
            <person name="Klaerr-Blanchard M."/>
            <person name="Klein C."/>
            <person name="Kobayashi Y."/>
            <person name="Koetter P."/>
            <person name="Koningstein G."/>
            <person name="Krogh S."/>
            <person name="Kumano M."/>
            <person name="Kurita K."/>
            <person name="Lapidus A."/>
            <person name="Lardinois S."/>
            <person name="Lauber J."/>
            <person name="Lazarevic V."/>
            <person name="Lee S.-M."/>
            <person name="Levine A."/>
            <person name="Liu H."/>
            <person name="Masuda S."/>
            <person name="Mauel C."/>
            <person name="Medigue C."/>
            <person name="Medina N."/>
            <person name="Mellado R.P."/>
            <person name="Mizuno M."/>
            <person name="Moestl D."/>
            <person name="Nakai S."/>
            <person name="Noback M."/>
            <person name="Noone D."/>
            <person name="O'Reilly M."/>
            <person name="Ogawa K."/>
            <person name="Ogiwara A."/>
            <person name="Oudega B."/>
            <person name="Park S.-H."/>
            <person name="Parro V."/>
            <person name="Pohl T.M."/>
            <person name="Portetelle D."/>
            <person name="Porwollik S."/>
            <person name="Prescott A.M."/>
            <person name="Presecan E."/>
            <person name="Pujic P."/>
            <person name="Purnelle B."/>
            <person name="Rapoport G."/>
            <person name="Rey M."/>
            <person name="Reynolds S."/>
            <person name="Rieger M."/>
            <person name="Rivolta C."/>
            <person name="Rocha E."/>
            <person name="Roche B."/>
            <person name="Rose M."/>
            <person name="Sadaie Y."/>
            <person name="Sato T."/>
            <person name="Scanlan E."/>
            <person name="Schleich S."/>
            <person name="Schroeter R."/>
            <person name="Scoffone F."/>
            <person name="Sekiguchi J."/>
            <person name="Sekowska A."/>
            <person name="Seror S.J."/>
            <person name="Serror P."/>
            <person name="Shin B.-S."/>
            <person name="Soldo B."/>
            <person name="Sorokin A."/>
            <person name="Tacconi E."/>
            <person name="Takagi T."/>
            <person name="Takahashi H."/>
            <person name="Takemaru K."/>
            <person name="Takeuchi M."/>
            <person name="Tamakoshi A."/>
            <person name="Tanaka T."/>
            <person name="Terpstra P."/>
            <person name="Tognoni A."/>
            <person name="Tosato V."/>
            <person name="Uchiyama S."/>
            <person name="Vandenbol M."/>
            <person name="Vannier F."/>
            <person name="Vassarotti A."/>
            <person name="Viari A."/>
            <person name="Wambutt R."/>
            <person name="Wedler E."/>
            <person name="Wedler H."/>
            <person name="Weitzenegger T."/>
            <person name="Winters P."/>
            <person name="Wipat A."/>
            <person name="Yamamoto H."/>
            <person name="Yamane K."/>
            <person name="Yasumoto K."/>
            <person name="Yata K."/>
            <person name="Yoshida K."/>
            <person name="Yoshikawa H.-F."/>
            <person name="Zumstein E."/>
            <person name="Yoshikawa H."/>
            <person name="Danchin A."/>
        </authorList>
    </citation>
    <scope>NUCLEOTIDE SEQUENCE [LARGE SCALE GENOMIC DNA]</scope>
    <source>
        <strain>168</strain>
    </source>
</reference>
<reference key="3">
    <citation type="journal article" date="1999" name="Genome Res.">
        <title>Detecting and analyzing DNA sequencing errors: toward a higher quality of the Bacillus subtilis genome sequence.</title>
        <authorList>
            <person name="Medigue C."/>
            <person name="Rose M."/>
            <person name="Viari A."/>
            <person name="Danchin A."/>
        </authorList>
    </citation>
    <scope>SEQUENCE REVISION TO C-TERMINUS</scope>
</reference>
<reference key="4">
    <citation type="journal article" date="2009" name="Microbiology">
        <title>From a consortium sequence to a unified sequence: the Bacillus subtilis 168 reference genome a decade later.</title>
        <authorList>
            <person name="Barbe V."/>
            <person name="Cruveiller S."/>
            <person name="Kunst F."/>
            <person name="Lenoble P."/>
            <person name="Meurice G."/>
            <person name="Sekowska A."/>
            <person name="Vallenet D."/>
            <person name="Wang T."/>
            <person name="Moszer I."/>
            <person name="Medigue C."/>
            <person name="Danchin A."/>
        </authorList>
    </citation>
    <scope>SEQUENCE REVISION TO 269 AND 271</scope>
</reference>
<proteinExistence type="inferred from homology"/>
<sequence length="472" mass="50131">MELIIILLALGLLMFTAYRGFSVILFAPICALFAVLLTDPSHVLPFFSSIFMEKMAGFIKLYFPVFLLGAIFGKVVEMAGLAASIAKTIVRLVGAKRAILAIVLMGAVLTYSGVSLFVVVFAVYPFAKNMFQEANIPKRLIPGTIALGAFTFTMDALPGTPQIQNVIPTSFFKTDIYAAPWLGLMGAVIVLAAGMLYLESRRKKAQASGEGYGGFDSQNAPAPESIESAAEPDKSPIRHALAFVPLILVGAVNKYFTIYLPKWYPNGFDFSSIGLKEFGRLDISSAAAIWSVEIALVIGIITTILFDWRSVFAQLKEGLNEGIGGALLASMNTGAEYGFGGIIAALPGFHKLSSGISHTFTDPLVNGAVTTTALAGITGSASGGMGIALSAMSEQYLQAIQAYNIPPEVMHRVISMASGGMDTLPHNGAVITLLAVTGLTHRQSYRDIFAITLIKTAAVFAVIAIYSLTGLV</sequence>
<evidence type="ECO:0000255" key="1"/>
<evidence type="ECO:0000256" key="2">
    <source>
        <dbReference type="SAM" id="MobiDB-lite"/>
    </source>
</evidence>
<evidence type="ECO:0000305" key="3"/>
<comment type="subcellular location">
    <subcellularLocation>
        <location evidence="3">Cell membrane</location>
        <topology evidence="3">Multi-pass membrane protein</topology>
    </subcellularLocation>
</comment>
<comment type="similarity">
    <text evidence="3">Belongs to the CitM (TC 2.A.11) transporter family.</text>
</comment>
<comment type="sequence caution" evidence="3">
    <conflict type="frameshift">
        <sequence resource="EMBL-CDS" id="BAA11704"/>
    </conflict>
</comment>
<protein>
    <recommendedName>
        <fullName>Uncharacterized transporter YxjC</fullName>
    </recommendedName>
</protein>
<gene>
    <name type="primary">yxjC</name>
    <name type="ordered locus">BSU39000</name>
    <name type="ORF">N15J</name>
</gene>
<feature type="chain" id="PRO_0000050034" description="Uncharacterized transporter YxjC">
    <location>
        <begin position="1"/>
        <end position="472"/>
    </location>
</feature>
<feature type="transmembrane region" description="Helical" evidence="1">
    <location>
        <begin position="4"/>
        <end position="24"/>
    </location>
</feature>
<feature type="transmembrane region" description="Helical" evidence="1">
    <location>
        <begin position="27"/>
        <end position="47"/>
    </location>
</feature>
<feature type="transmembrane region" description="Helical" evidence="1">
    <location>
        <begin position="56"/>
        <end position="76"/>
    </location>
</feature>
<feature type="transmembrane region" description="Helical" evidence="1">
    <location>
        <begin position="99"/>
        <end position="119"/>
    </location>
</feature>
<feature type="transmembrane region" description="Helical" evidence="1">
    <location>
        <begin position="140"/>
        <end position="160"/>
    </location>
</feature>
<feature type="transmembrane region" description="Helical" evidence="1">
    <location>
        <begin position="176"/>
        <end position="196"/>
    </location>
</feature>
<feature type="transmembrane region" description="Helical" evidence="1">
    <location>
        <begin position="240"/>
        <end position="260"/>
    </location>
</feature>
<feature type="transmembrane region" description="Helical" evidence="1">
    <location>
        <begin position="286"/>
        <end position="306"/>
    </location>
</feature>
<feature type="transmembrane region" description="Helical" evidence="1">
    <location>
        <begin position="323"/>
        <end position="343"/>
    </location>
</feature>
<feature type="transmembrane region" description="Helical" evidence="1">
    <location>
        <begin position="372"/>
        <end position="392"/>
    </location>
</feature>
<feature type="transmembrane region" description="Helical" evidence="1">
    <location>
        <begin position="448"/>
        <end position="468"/>
    </location>
</feature>
<feature type="region of interest" description="Disordered" evidence="2">
    <location>
        <begin position="209"/>
        <end position="229"/>
    </location>
</feature>
<feature type="compositionally biased region" description="Low complexity" evidence="2">
    <location>
        <begin position="220"/>
        <end position="229"/>
    </location>
</feature>
<feature type="sequence conflict" description="In Ref. 1; BAA11704." evidence="3" ref="1">
    <original>DFS</original>
    <variation>NFP</variation>
    <location>
        <begin position="269"/>
        <end position="271"/>
    </location>
</feature>
<organism>
    <name type="scientific">Bacillus subtilis (strain 168)</name>
    <dbReference type="NCBI Taxonomy" id="224308"/>
    <lineage>
        <taxon>Bacteria</taxon>
        <taxon>Bacillati</taxon>
        <taxon>Bacillota</taxon>
        <taxon>Bacilli</taxon>
        <taxon>Bacillales</taxon>
        <taxon>Bacillaceae</taxon>
        <taxon>Bacillus</taxon>
    </lineage>
</organism>